<evidence type="ECO:0000255" key="1">
    <source>
        <dbReference type="HAMAP-Rule" id="MF_00071"/>
    </source>
</evidence>
<dbReference type="EC" id="3.6.5.n1" evidence="1"/>
<dbReference type="EMBL" id="CP000266">
    <property type="protein sequence ID" value="ABF04729.1"/>
    <property type="molecule type" value="Genomic_DNA"/>
</dbReference>
<dbReference type="RefSeq" id="WP_000790168.1">
    <property type="nucleotide sequence ID" value="NC_008258.1"/>
</dbReference>
<dbReference type="SMR" id="Q0T1T6"/>
<dbReference type="GeneID" id="93774522"/>
<dbReference type="KEGG" id="sfv:SFV_2632"/>
<dbReference type="HOGENOM" id="CLU_009995_3_3_6"/>
<dbReference type="Proteomes" id="UP000000659">
    <property type="component" value="Chromosome"/>
</dbReference>
<dbReference type="GO" id="GO:0005886">
    <property type="term" value="C:plasma membrane"/>
    <property type="evidence" value="ECO:0007669"/>
    <property type="project" value="UniProtKB-SubCell"/>
</dbReference>
<dbReference type="GO" id="GO:0005525">
    <property type="term" value="F:GTP binding"/>
    <property type="evidence" value="ECO:0007669"/>
    <property type="project" value="UniProtKB-UniRule"/>
</dbReference>
<dbReference type="GO" id="GO:0003924">
    <property type="term" value="F:GTPase activity"/>
    <property type="evidence" value="ECO:0007669"/>
    <property type="project" value="UniProtKB-UniRule"/>
</dbReference>
<dbReference type="GO" id="GO:0097216">
    <property type="term" value="F:guanosine tetraphosphate binding"/>
    <property type="evidence" value="ECO:0007669"/>
    <property type="project" value="UniProtKB-ARBA"/>
</dbReference>
<dbReference type="GO" id="GO:0043022">
    <property type="term" value="F:ribosome binding"/>
    <property type="evidence" value="ECO:0007669"/>
    <property type="project" value="UniProtKB-UniRule"/>
</dbReference>
<dbReference type="GO" id="GO:0003746">
    <property type="term" value="F:translation elongation factor activity"/>
    <property type="evidence" value="ECO:0007669"/>
    <property type="project" value="UniProtKB-UniRule"/>
</dbReference>
<dbReference type="GO" id="GO:0045727">
    <property type="term" value="P:positive regulation of translation"/>
    <property type="evidence" value="ECO:0007669"/>
    <property type="project" value="UniProtKB-UniRule"/>
</dbReference>
<dbReference type="CDD" id="cd03699">
    <property type="entry name" value="EF4_II"/>
    <property type="match status" value="1"/>
</dbReference>
<dbReference type="CDD" id="cd16260">
    <property type="entry name" value="EF4_III"/>
    <property type="match status" value="1"/>
</dbReference>
<dbReference type="CDD" id="cd01890">
    <property type="entry name" value="LepA"/>
    <property type="match status" value="1"/>
</dbReference>
<dbReference type="CDD" id="cd03709">
    <property type="entry name" value="lepA_C"/>
    <property type="match status" value="1"/>
</dbReference>
<dbReference type="FunFam" id="3.30.70.240:FF:000005">
    <property type="entry name" value="Elongation factor 4"/>
    <property type="match status" value="1"/>
</dbReference>
<dbReference type="FunFam" id="3.40.50.300:FF:000078">
    <property type="entry name" value="Elongation factor 4"/>
    <property type="match status" value="1"/>
</dbReference>
<dbReference type="FunFam" id="2.40.30.10:FF:000015">
    <property type="entry name" value="Translation factor GUF1, mitochondrial"/>
    <property type="match status" value="1"/>
</dbReference>
<dbReference type="FunFam" id="3.30.70.2570:FF:000001">
    <property type="entry name" value="Translation factor GUF1, mitochondrial"/>
    <property type="match status" value="1"/>
</dbReference>
<dbReference type="FunFam" id="3.30.70.870:FF:000004">
    <property type="entry name" value="Translation factor GUF1, mitochondrial"/>
    <property type="match status" value="1"/>
</dbReference>
<dbReference type="Gene3D" id="3.30.70.240">
    <property type="match status" value="1"/>
</dbReference>
<dbReference type="Gene3D" id="3.30.70.2570">
    <property type="entry name" value="Elongation factor 4, C-terminal domain"/>
    <property type="match status" value="1"/>
</dbReference>
<dbReference type="Gene3D" id="3.30.70.870">
    <property type="entry name" value="Elongation Factor G (Translational Gtpase), domain 3"/>
    <property type="match status" value="1"/>
</dbReference>
<dbReference type="Gene3D" id="3.40.50.300">
    <property type="entry name" value="P-loop containing nucleotide triphosphate hydrolases"/>
    <property type="match status" value="1"/>
</dbReference>
<dbReference type="Gene3D" id="2.40.30.10">
    <property type="entry name" value="Translation factors"/>
    <property type="match status" value="1"/>
</dbReference>
<dbReference type="HAMAP" id="MF_00071">
    <property type="entry name" value="LepA"/>
    <property type="match status" value="1"/>
</dbReference>
<dbReference type="InterPro" id="IPR006297">
    <property type="entry name" value="EF-4"/>
</dbReference>
<dbReference type="InterPro" id="IPR035647">
    <property type="entry name" value="EFG_III/V"/>
</dbReference>
<dbReference type="InterPro" id="IPR000640">
    <property type="entry name" value="EFG_V-like"/>
</dbReference>
<dbReference type="InterPro" id="IPR004161">
    <property type="entry name" value="EFTu-like_2"/>
</dbReference>
<dbReference type="InterPro" id="IPR031157">
    <property type="entry name" value="G_TR_CS"/>
</dbReference>
<dbReference type="InterPro" id="IPR038363">
    <property type="entry name" value="LepA_C_sf"/>
</dbReference>
<dbReference type="InterPro" id="IPR013842">
    <property type="entry name" value="LepA_CTD"/>
</dbReference>
<dbReference type="InterPro" id="IPR035654">
    <property type="entry name" value="LepA_IV"/>
</dbReference>
<dbReference type="InterPro" id="IPR027417">
    <property type="entry name" value="P-loop_NTPase"/>
</dbReference>
<dbReference type="InterPro" id="IPR005225">
    <property type="entry name" value="Small_GTP-bd"/>
</dbReference>
<dbReference type="InterPro" id="IPR000795">
    <property type="entry name" value="T_Tr_GTP-bd_dom"/>
</dbReference>
<dbReference type="NCBIfam" id="TIGR01393">
    <property type="entry name" value="lepA"/>
    <property type="match status" value="1"/>
</dbReference>
<dbReference type="NCBIfam" id="TIGR00231">
    <property type="entry name" value="small_GTP"/>
    <property type="match status" value="1"/>
</dbReference>
<dbReference type="PANTHER" id="PTHR43512:SF4">
    <property type="entry name" value="TRANSLATION FACTOR GUF1 HOMOLOG, CHLOROPLASTIC"/>
    <property type="match status" value="1"/>
</dbReference>
<dbReference type="PANTHER" id="PTHR43512">
    <property type="entry name" value="TRANSLATION FACTOR GUF1-RELATED"/>
    <property type="match status" value="1"/>
</dbReference>
<dbReference type="Pfam" id="PF00679">
    <property type="entry name" value="EFG_C"/>
    <property type="match status" value="1"/>
</dbReference>
<dbReference type="Pfam" id="PF00009">
    <property type="entry name" value="GTP_EFTU"/>
    <property type="match status" value="1"/>
</dbReference>
<dbReference type="Pfam" id="PF03144">
    <property type="entry name" value="GTP_EFTU_D2"/>
    <property type="match status" value="1"/>
</dbReference>
<dbReference type="Pfam" id="PF06421">
    <property type="entry name" value="LepA_C"/>
    <property type="match status" value="1"/>
</dbReference>
<dbReference type="PRINTS" id="PR00315">
    <property type="entry name" value="ELONGATNFCT"/>
</dbReference>
<dbReference type="SUPFAM" id="SSF54980">
    <property type="entry name" value="EF-G C-terminal domain-like"/>
    <property type="match status" value="2"/>
</dbReference>
<dbReference type="SUPFAM" id="SSF52540">
    <property type="entry name" value="P-loop containing nucleoside triphosphate hydrolases"/>
    <property type="match status" value="1"/>
</dbReference>
<dbReference type="PROSITE" id="PS00301">
    <property type="entry name" value="G_TR_1"/>
    <property type="match status" value="1"/>
</dbReference>
<dbReference type="PROSITE" id="PS51722">
    <property type="entry name" value="G_TR_2"/>
    <property type="match status" value="1"/>
</dbReference>
<protein>
    <recommendedName>
        <fullName evidence="1">Elongation factor 4</fullName>
        <shortName evidence="1">EF-4</shortName>
        <ecNumber evidence="1">3.6.5.n1</ecNumber>
    </recommendedName>
    <alternativeName>
        <fullName evidence="1">Ribosomal back-translocase LepA</fullName>
    </alternativeName>
</protein>
<organism>
    <name type="scientific">Shigella flexneri serotype 5b (strain 8401)</name>
    <dbReference type="NCBI Taxonomy" id="373384"/>
    <lineage>
        <taxon>Bacteria</taxon>
        <taxon>Pseudomonadati</taxon>
        <taxon>Pseudomonadota</taxon>
        <taxon>Gammaproteobacteria</taxon>
        <taxon>Enterobacterales</taxon>
        <taxon>Enterobacteriaceae</taxon>
        <taxon>Shigella</taxon>
    </lineage>
</organism>
<gene>
    <name evidence="1" type="primary">lepA</name>
    <name type="ordered locus">SFV_2632</name>
</gene>
<proteinExistence type="inferred from homology"/>
<feature type="chain" id="PRO_1000032056" description="Elongation factor 4">
    <location>
        <begin position="1"/>
        <end position="599"/>
    </location>
</feature>
<feature type="domain" description="tr-type G">
    <location>
        <begin position="2"/>
        <end position="184"/>
    </location>
</feature>
<feature type="binding site" evidence="1">
    <location>
        <begin position="14"/>
        <end position="19"/>
    </location>
    <ligand>
        <name>GTP</name>
        <dbReference type="ChEBI" id="CHEBI:37565"/>
    </ligand>
</feature>
<feature type="binding site" evidence="1">
    <location>
        <begin position="131"/>
        <end position="134"/>
    </location>
    <ligand>
        <name>GTP</name>
        <dbReference type="ChEBI" id="CHEBI:37565"/>
    </ligand>
</feature>
<accession>Q0T1T6</accession>
<sequence>MKNIRNFSIIAHIDHGKSTLSDRIIQICGGLSDREMEAQVLDSMDLERERGITIKAQSVTLDYKASDGETYQLNFIDTPGHVDFSYEVSRSLAACEGALLVVDAGQGVEAQTLANCYTAMEMDLEVVPVLNKIDLPAADPERVAEEIEDIVGIDATDAVRCSAKTGVGVQDVLERLVRDIPPPEGDPEGPLQALIIDSWFDNYLGVVSLIRIKNGTLRKGDKVKVMSTGQTYNADRLGIFTPKQVDRTELKCGEVGWLVCAIKDIHGAPVGDTLTLARNPAEKALPGFKKVKPQVYAGLFPVSSDDYEAFRDALGKLSLNDASLFYEPESSSALGFGFRCGFLGLLHMEIIQERLEREYDLDLITTAPTVVYEVETTSREVIYVDSPSKLPAVNNIYELREPIAECHMLLPQAYLGNVITLCVEKRGVQTNMVYHGNQVALTYEIPMAEVVLDFFDRLKSTSRGYASLDYNFKRFQASDMVRVDVLINGERVDALALITHRDNSQNRGRELVEKMKDLIPRQQFDIAIQAAIGTHIIARSTVKQLRKNVLAKCYGGDISRKKKLLQKQKEGKKRMKQIGNVELPQEAFLAILHVGKDNK</sequence>
<comment type="function">
    <text evidence="1">Required for accurate and efficient protein synthesis under certain stress conditions. May act as a fidelity factor of the translation reaction, by catalyzing a one-codon backward translocation of tRNAs on improperly translocated ribosomes. Back-translocation proceeds from a post-translocation (POST) complex to a pre-translocation (PRE) complex, thus giving elongation factor G a second chance to translocate the tRNAs correctly. Binds to ribosomes in a GTP-dependent manner.</text>
</comment>
<comment type="catalytic activity">
    <reaction evidence="1">
        <text>GTP + H2O = GDP + phosphate + H(+)</text>
        <dbReference type="Rhea" id="RHEA:19669"/>
        <dbReference type="ChEBI" id="CHEBI:15377"/>
        <dbReference type="ChEBI" id="CHEBI:15378"/>
        <dbReference type="ChEBI" id="CHEBI:37565"/>
        <dbReference type="ChEBI" id="CHEBI:43474"/>
        <dbReference type="ChEBI" id="CHEBI:58189"/>
        <dbReference type="EC" id="3.6.5.n1"/>
    </reaction>
</comment>
<comment type="subcellular location">
    <subcellularLocation>
        <location evidence="1">Cell inner membrane</location>
        <topology evidence="1">Peripheral membrane protein</topology>
        <orientation evidence="1">Cytoplasmic side</orientation>
    </subcellularLocation>
</comment>
<comment type="similarity">
    <text evidence="1">Belongs to the TRAFAC class translation factor GTPase superfamily. Classic translation factor GTPase family. LepA subfamily.</text>
</comment>
<keyword id="KW-0997">Cell inner membrane</keyword>
<keyword id="KW-1003">Cell membrane</keyword>
<keyword id="KW-0342">GTP-binding</keyword>
<keyword id="KW-0378">Hydrolase</keyword>
<keyword id="KW-0472">Membrane</keyword>
<keyword id="KW-0547">Nucleotide-binding</keyword>
<keyword id="KW-0648">Protein biosynthesis</keyword>
<reference key="1">
    <citation type="journal article" date="2006" name="BMC Genomics">
        <title>Complete genome sequence of Shigella flexneri 5b and comparison with Shigella flexneri 2a.</title>
        <authorList>
            <person name="Nie H."/>
            <person name="Yang F."/>
            <person name="Zhang X."/>
            <person name="Yang J."/>
            <person name="Chen L."/>
            <person name="Wang J."/>
            <person name="Xiong Z."/>
            <person name="Peng J."/>
            <person name="Sun L."/>
            <person name="Dong J."/>
            <person name="Xue Y."/>
            <person name="Xu X."/>
            <person name="Chen S."/>
            <person name="Yao Z."/>
            <person name="Shen Y."/>
            <person name="Jin Q."/>
        </authorList>
    </citation>
    <scope>NUCLEOTIDE SEQUENCE [LARGE SCALE GENOMIC DNA]</scope>
    <source>
        <strain>8401</strain>
    </source>
</reference>
<name>LEPA_SHIF8</name>